<dbReference type="EC" id="6.3.3.3" evidence="1"/>
<dbReference type="EMBL" id="L77117">
    <property type="protein sequence ID" value="AAB99306.1"/>
    <property type="status" value="ALT_INIT"/>
    <property type="molecule type" value="Genomic_DNA"/>
</dbReference>
<dbReference type="PIR" id="B64462">
    <property type="entry name" value="B64462"/>
</dbReference>
<dbReference type="RefSeq" id="WP_064496780.1">
    <property type="nucleotide sequence ID" value="NC_000909.1"/>
</dbReference>
<dbReference type="SMR" id="Q58695"/>
<dbReference type="FunCoup" id="Q58695">
    <property type="interactions" value="110"/>
</dbReference>
<dbReference type="STRING" id="243232.MJ_1299"/>
<dbReference type="PaxDb" id="243232-MJ_1299"/>
<dbReference type="EnsemblBacteria" id="AAB99306">
    <property type="protein sequence ID" value="AAB99306"/>
    <property type="gene ID" value="MJ_1299"/>
</dbReference>
<dbReference type="GeneID" id="1452201"/>
<dbReference type="KEGG" id="mja:MJ_1299"/>
<dbReference type="eggNOG" id="arCOG00100">
    <property type="taxonomic scope" value="Archaea"/>
</dbReference>
<dbReference type="HOGENOM" id="CLU_072551_2_0_2"/>
<dbReference type="InParanoid" id="Q58695"/>
<dbReference type="OrthoDB" id="50320at2157"/>
<dbReference type="PhylomeDB" id="Q58695"/>
<dbReference type="UniPathway" id="UPA00078">
    <property type="reaction ID" value="UER00161"/>
</dbReference>
<dbReference type="Proteomes" id="UP000000805">
    <property type="component" value="Chromosome"/>
</dbReference>
<dbReference type="GO" id="GO:0005829">
    <property type="term" value="C:cytosol"/>
    <property type="evidence" value="ECO:0000318"/>
    <property type="project" value="GO_Central"/>
</dbReference>
<dbReference type="GO" id="GO:0005524">
    <property type="term" value="F:ATP binding"/>
    <property type="evidence" value="ECO:0007669"/>
    <property type="project" value="UniProtKB-UniRule"/>
</dbReference>
<dbReference type="GO" id="GO:0004141">
    <property type="term" value="F:dethiobiotin synthase activity"/>
    <property type="evidence" value="ECO:0000318"/>
    <property type="project" value="GO_Central"/>
</dbReference>
<dbReference type="GO" id="GO:0000287">
    <property type="term" value="F:magnesium ion binding"/>
    <property type="evidence" value="ECO:0007669"/>
    <property type="project" value="UniProtKB-UniRule"/>
</dbReference>
<dbReference type="GO" id="GO:0009102">
    <property type="term" value="P:biotin biosynthetic process"/>
    <property type="evidence" value="ECO:0000318"/>
    <property type="project" value="GO_Central"/>
</dbReference>
<dbReference type="CDD" id="cd03109">
    <property type="entry name" value="DTBS"/>
    <property type="match status" value="1"/>
</dbReference>
<dbReference type="FunFam" id="3.40.50.300:FF:000292">
    <property type="entry name" value="ATP-dependent dethiobiotin synthetase BioD"/>
    <property type="match status" value="1"/>
</dbReference>
<dbReference type="Gene3D" id="3.40.50.300">
    <property type="entry name" value="P-loop containing nucleotide triphosphate hydrolases"/>
    <property type="match status" value="1"/>
</dbReference>
<dbReference type="HAMAP" id="MF_00336">
    <property type="entry name" value="BioD"/>
    <property type="match status" value="1"/>
</dbReference>
<dbReference type="InterPro" id="IPR004472">
    <property type="entry name" value="DTB_synth_BioD"/>
</dbReference>
<dbReference type="InterPro" id="IPR027417">
    <property type="entry name" value="P-loop_NTPase"/>
</dbReference>
<dbReference type="NCBIfam" id="TIGR00347">
    <property type="entry name" value="bioD"/>
    <property type="match status" value="1"/>
</dbReference>
<dbReference type="PANTHER" id="PTHR43210">
    <property type="entry name" value="DETHIOBIOTIN SYNTHETASE"/>
    <property type="match status" value="1"/>
</dbReference>
<dbReference type="PANTHER" id="PTHR43210:SF5">
    <property type="entry name" value="DETHIOBIOTIN SYNTHETASE"/>
    <property type="match status" value="1"/>
</dbReference>
<dbReference type="Pfam" id="PF13500">
    <property type="entry name" value="AAA_26"/>
    <property type="match status" value="1"/>
</dbReference>
<dbReference type="PIRSF" id="PIRSF006755">
    <property type="entry name" value="DTB_synth"/>
    <property type="match status" value="1"/>
</dbReference>
<dbReference type="SUPFAM" id="SSF52540">
    <property type="entry name" value="P-loop containing nucleoside triphosphate hydrolases"/>
    <property type="match status" value="1"/>
</dbReference>
<name>BIOD_METJA</name>
<gene>
    <name evidence="1" type="primary">bioD</name>
    <name type="ordered locus">MJ1299</name>
</gene>
<feature type="chain" id="PRO_0000188005" description="ATP-dependent dethiobiotin synthetase BioD">
    <location>
        <begin position="1"/>
        <end position="214"/>
    </location>
</feature>
<feature type="active site" evidence="1">
    <location>
        <position position="35"/>
    </location>
</feature>
<feature type="binding site" evidence="1">
    <location>
        <begin position="10"/>
        <end position="15"/>
    </location>
    <ligand>
        <name>ATP</name>
        <dbReference type="ChEBI" id="CHEBI:30616"/>
    </ligand>
</feature>
<feature type="binding site" evidence="1">
    <location>
        <position position="14"/>
    </location>
    <ligand>
        <name>Mg(2+)</name>
        <dbReference type="ChEBI" id="CHEBI:18420"/>
    </ligand>
</feature>
<feature type="binding site" evidence="1">
    <location>
        <position position="39"/>
    </location>
    <ligand>
        <name>substrate</name>
    </ligand>
</feature>
<feature type="binding site" evidence="1">
    <location>
        <position position="44"/>
    </location>
    <ligand>
        <name>ATP</name>
        <dbReference type="ChEBI" id="CHEBI:30616"/>
    </ligand>
</feature>
<feature type="binding site" evidence="1">
    <location>
        <position position="44"/>
    </location>
    <ligand>
        <name>Mg(2+)</name>
        <dbReference type="ChEBI" id="CHEBI:18420"/>
    </ligand>
</feature>
<feature type="binding site" evidence="1">
    <location>
        <begin position="109"/>
        <end position="112"/>
    </location>
    <ligand>
        <name>ATP</name>
        <dbReference type="ChEBI" id="CHEBI:30616"/>
    </ligand>
</feature>
<feature type="binding site" evidence="1">
    <location>
        <position position="109"/>
    </location>
    <ligand>
        <name>Mg(2+)</name>
        <dbReference type="ChEBI" id="CHEBI:18420"/>
    </ligand>
</feature>
<feature type="binding site" evidence="1">
    <location>
        <begin position="169"/>
        <end position="170"/>
    </location>
    <ligand>
        <name>ATP</name>
        <dbReference type="ChEBI" id="CHEBI:30616"/>
    </ligand>
</feature>
<organism>
    <name type="scientific">Methanocaldococcus jannaschii (strain ATCC 43067 / DSM 2661 / JAL-1 / JCM 10045 / NBRC 100440)</name>
    <name type="common">Methanococcus jannaschii</name>
    <dbReference type="NCBI Taxonomy" id="243232"/>
    <lineage>
        <taxon>Archaea</taxon>
        <taxon>Methanobacteriati</taxon>
        <taxon>Methanobacteriota</taxon>
        <taxon>Methanomada group</taxon>
        <taxon>Methanococci</taxon>
        <taxon>Methanococcales</taxon>
        <taxon>Methanocaldococcaceae</taxon>
        <taxon>Methanocaldococcus</taxon>
    </lineage>
</organism>
<keyword id="KW-0067">ATP-binding</keyword>
<keyword id="KW-0093">Biotin biosynthesis</keyword>
<keyword id="KW-0963">Cytoplasm</keyword>
<keyword id="KW-0436">Ligase</keyword>
<keyword id="KW-0460">Magnesium</keyword>
<keyword id="KW-0479">Metal-binding</keyword>
<keyword id="KW-0547">Nucleotide-binding</keyword>
<keyword id="KW-1185">Reference proteome</keyword>
<proteinExistence type="inferred from homology"/>
<comment type="function">
    <text evidence="1">Catalyzes a mechanistically unusual reaction, the ATP-dependent insertion of CO2 between the N7 and N8 nitrogen atoms of 7,8-diaminopelargonic acid (DAPA, also called 7,8-diammoniononanoate) to form a ureido ring.</text>
</comment>
<comment type="catalytic activity">
    <reaction evidence="1">
        <text>(7R,8S)-7,8-diammoniononanoate + CO2 + ATP = (4R,5S)-dethiobiotin + ADP + phosphate + 3 H(+)</text>
        <dbReference type="Rhea" id="RHEA:15805"/>
        <dbReference type="ChEBI" id="CHEBI:15378"/>
        <dbReference type="ChEBI" id="CHEBI:16526"/>
        <dbReference type="ChEBI" id="CHEBI:30616"/>
        <dbReference type="ChEBI" id="CHEBI:43474"/>
        <dbReference type="ChEBI" id="CHEBI:149469"/>
        <dbReference type="ChEBI" id="CHEBI:149473"/>
        <dbReference type="ChEBI" id="CHEBI:456216"/>
        <dbReference type="EC" id="6.3.3.3"/>
    </reaction>
</comment>
<comment type="cofactor">
    <cofactor evidence="1">
        <name>Mg(2+)</name>
        <dbReference type="ChEBI" id="CHEBI:18420"/>
    </cofactor>
</comment>
<comment type="pathway">
    <text evidence="1">Cofactor biosynthesis; biotin biosynthesis; biotin from 7,8-diaminononanoate: step 1/2.</text>
</comment>
<comment type="subunit">
    <text evidence="1">Homodimer.</text>
</comment>
<comment type="subcellular location">
    <subcellularLocation>
        <location evidence="1">Cytoplasm</location>
    </subcellularLocation>
</comment>
<comment type="similarity">
    <text evidence="1">Belongs to the dethiobiotin synthetase family.</text>
</comment>
<comment type="sequence caution" evidence="2">
    <conflict type="erroneous initiation">
        <sequence resource="EMBL-CDS" id="AAB99306"/>
    </conflict>
    <text>Extended N-terminus.</text>
</comment>
<reference key="1">
    <citation type="journal article" date="1996" name="Science">
        <title>Complete genome sequence of the methanogenic archaeon, Methanococcus jannaschii.</title>
        <authorList>
            <person name="Bult C.J."/>
            <person name="White O."/>
            <person name="Olsen G.J."/>
            <person name="Zhou L."/>
            <person name="Fleischmann R.D."/>
            <person name="Sutton G.G."/>
            <person name="Blake J.A."/>
            <person name="FitzGerald L.M."/>
            <person name="Clayton R.A."/>
            <person name="Gocayne J.D."/>
            <person name="Kerlavage A.R."/>
            <person name="Dougherty B.A."/>
            <person name="Tomb J.-F."/>
            <person name="Adams M.D."/>
            <person name="Reich C.I."/>
            <person name="Overbeek R."/>
            <person name="Kirkness E.F."/>
            <person name="Weinstock K.G."/>
            <person name="Merrick J.M."/>
            <person name="Glodek A."/>
            <person name="Scott J.L."/>
            <person name="Geoghagen N.S.M."/>
            <person name="Weidman J.F."/>
            <person name="Fuhrmann J.L."/>
            <person name="Nguyen D."/>
            <person name="Utterback T.R."/>
            <person name="Kelley J.M."/>
            <person name="Peterson J.D."/>
            <person name="Sadow P.W."/>
            <person name="Hanna M.C."/>
            <person name="Cotton M.D."/>
            <person name="Roberts K.M."/>
            <person name="Hurst M.A."/>
            <person name="Kaine B.P."/>
            <person name="Borodovsky M."/>
            <person name="Klenk H.-P."/>
            <person name="Fraser C.M."/>
            <person name="Smith H.O."/>
            <person name="Woese C.R."/>
            <person name="Venter J.C."/>
        </authorList>
    </citation>
    <scope>NUCLEOTIDE SEQUENCE [LARGE SCALE GENOMIC DNA]</scope>
    <source>
        <strain>ATCC 43067 / DSM 2661 / JAL-1 / JCM 10045 / NBRC 100440</strain>
    </source>
</reference>
<sequence>MIFITGTDTGIGKTYVSSILAENLKKMGINVGYLKPVETGGREDTLTLKNILNTDDDLDLMNPINLKLPLSPNIAFDVENSPLTLDEIKEKIKNAYETLKEKYDFLIVEGAGGVCVPIKEDFLMSDLIKFLGLDAVVVSRPNLGTINHTLLTVEHLRNKGINVRGVIINCITDLSEVLYYEKTFETIEKVGNIEIIGIVKSREDFEIDFEKILR</sequence>
<evidence type="ECO:0000255" key="1">
    <source>
        <dbReference type="HAMAP-Rule" id="MF_00336"/>
    </source>
</evidence>
<evidence type="ECO:0000305" key="2"/>
<protein>
    <recommendedName>
        <fullName evidence="1">ATP-dependent dethiobiotin synthetase BioD</fullName>
        <ecNumber evidence="1">6.3.3.3</ecNumber>
    </recommendedName>
    <alternativeName>
        <fullName evidence="1">DTB synthetase</fullName>
        <shortName evidence="1">DTBS</shortName>
    </alternativeName>
    <alternativeName>
        <fullName evidence="1">Dethiobiotin synthase</fullName>
    </alternativeName>
</protein>
<accession>Q58695</accession>